<feature type="chain" id="PRO_1000122814" description="UDP-3-O-acyl-N-acetylglucosamine deacetylase">
    <location>
        <begin position="1"/>
        <end position="305"/>
    </location>
</feature>
<feature type="active site" description="Proton donor" evidence="1">
    <location>
        <position position="265"/>
    </location>
</feature>
<feature type="binding site" evidence="1">
    <location>
        <position position="79"/>
    </location>
    <ligand>
        <name>Zn(2+)</name>
        <dbReference type="ChEBI" id="CHEBI:29105"/>
    </ligand>
</feature>
<feature type="binding site" evidence="1">
    <location>
        <position position="238"/>
    </location>
    <ligand>
        <name>Zn(2+)</name>
        <dbReference type="ChEBI" id="CHEBI:29105"/>
    </ligand>
</feature>
<feature type="binding site" evidence="1">
    <location>
        <position position="242"/>
    </location>
    <ligand>
        <name>Zn(2+)</name>
        <dbReference type="ChEBI" id="CHEBI:29105"/>
    </ligand>
</feature>
<organism>
    <name type="scientific">Salmonella dublin (strain CT_02021853)</name>
    <dbReference type="NCBI Taxonomy" id="439851"/>
    <lineage>
        <taxon>Bacteria</taxon>
        <taxon>Pseudomonadati</taxon>
        <taxon>Pseudomonadota</taxon>
        <taxon>Gammaproteobacteria</taxon>
        <taxon>Enterobacterales</taxon>
        <taxon>Enterobacteriaceae</taxon>
        <taxon>Salmonella</taxon>
    </lineage>
</organism>
<evidence type="ECO:0000255" key="1">
    <source>
        <dbReference type="HAMAP-Rule" id="MF_00388"/>
    </source>
</evidence>
<protein>
    <recommendedName>
        <fullName evidence="1">UDP-3-O-acyl-N-acetylglucosamine deacetylase</fullName>
        <shortName evidence="1">UDP-3-O-acyl-GlcNAc deacetylase</shortName>
        <ecNumber evidence="1">3.5.1.108</ecNumber>
    </recommendedName>
    <alternativeName>
        <fullName evidence="1">UDP-3-O-[R-3-hydroxymyristoyl]-N-acetylglucosamine deacetylase</fullName>
    </alternativeName>
</protein>
<dbReference type="EC" id="3.5.1.108" evidence="1"/>
<dbReference type="EMBL" id="CP001144">
    <property type="protein sequence ID" value="ACH76802.1"/>
    <property type="molecule type" value="Genomic_DNA"/>
</dbReference>
<dbReference type="RefSeq" id="WP_000595487.1">
    <property type="nucleotide sequence ID" value="NC_011205.1"/>
</dbReference>
<dbReference type="SMR" id="B5FI78"/>
<dbReference type="KEGG" id="sed:SeD_A0143"/>
<dbReference type="HOGENOM" id="CLU_046528_1_0_6"/>
<dbReference type="UniPathway" id="UPA00359">
    <property type="reaction ID" value="UER00478"/>
</dbReference>
<dbReference type="Proteomes" id="UP000008322">
    <property type="component" value="Chromosome"/>
</dbReference>
<dbReference type="GO" id="GO:0016020">
    <property type="term" value="C:membrane"/>
    <property type="evidence" value="ECO:0007669"/>
    <property type="project" value="GOC"/>
</dbReference>
<dbReference type="GO" id="GO:0046872">
    <property type="term" value="F:metal ion binding"/>
    <property type="evidence" value="ECO:0007669"/>
    <property type="project" value="UniProtKB-KW"/>
</dbReference>
<dbReference type="GO" id="GO:0103117">
    <property type="term" value="F:UDP-3-O-acyl-N-acetylglucosamine deacetylase activity"/>
    <property type="evidence" value="ECO:0007669"/>
    <property type="project" value="UniProtKB-UniRule"/>
</dbReference>
<dbReference type="GO" id="GO:0009245">
    <property type="term" value="P:lipid A biosynthetic process"/>
    <property type="evidence" value="ECO:0007669"/>
    <property type="project" value="UniProtKB-UniRule"/>
</dbReference>
<dbReference type="FunFam" id="3.30.1700.10:FF:000001">
    <property type="entry name" value="UDP-3-O-acyl-N-acetylglucosamine deacetylase"/>
    <property type="match status" value="1"/>
</dbReference>
<dbReference type="FunFam" id="3.30.230.20:FF:000001">
    <property type="entry name" value="UDP-3-O-acyl-N-acetylglucosamine deacetylase"/>
    <property type="match status" value="1"/>
</dbReference>
<dbReference type="Gene3D" id="3.30.230.20">
    <property type="entry name" value="lpxc deacetylase, domain 1"/>
    <property type="match status" value="1"/>
</dbReference>
<dbReference type="Gene3D" id="3.30.1700.10">
    <property type="entry name" value="lpxc deacetylase, domain 2"/>
    <property type="match status" value="1"/>
</dbReference>
<dbReference type="HAMAP" id="MF_00388">
    <property type="entry name" value="LpxC"/>
    <property type="match status" value="1"/>
</dbReference>
<dbReference type="InterPro" id="IPR020568">
    <property type="entry name" value="Ribosomal_Su5_D2-typ_SF"/>
</dbReference>
<dbReference type="InterPro" id="IPR004463">
    <property type="entry name" value="UDP-acyl_GlcNac_deAcase"/>
</dbReference>
<dbReference type="InterPro" id="IPR011334">
    <property type="entry name" value="UDP-acyl_GlcNac_deAcase_C"/>
</dbReference>
<dbReference type="InterPro" id="IPR015870">
    <property type="entry name" value="UDP-acyl_N-AcGlcN_deAcase_N"/>
</dbReference>
<dbReference type="NCBIfam" id="TIGR00325">
    <property type="entry name" value="lpxC"/>
    <property type="match status" value="1"/>
</dbReference>
<dbReference type="PANTHER" id="PTHR33694">
    <property type="entry name" value="UDP-3-O-ACYL-N-ACETYLGLUCOSAMINE DEACETYLASE 1, MITOCHONDRIAL-RELATED"/>
    <property type="match status" value="1"/>
</dbReference>
<dbReference type="PANTHER" id="PTHR33694:SF1">
    <property type="entry name" value="UDP-3-O-ACYL-N-ACETYLGLUCOSAMINE DEACETYLASE 1, MITOCHONDRIAL-RELATED"/>
    <property type="match status" value="1"/>
</dbReference>
<dbReference type="Pfam" id="PF03331">
    <property type="entry name" value="LpxC"/>
    <property type="match status" value="1"/>
</dbReference>
<dbReference type="SUPFAM" id="SSF54211">
    <property type="entry name" value="Ribosomal protein S5 domain 2-like"/>
    <property type="match status" value="2"/>
</dbReference>
<sequence length="305" mass="33985">MIKQRTLKRIVQATGVGLHTGKKVTLTLRPAPANTGVIYRRTDLNPPVDFPADAKSVRDTMLCTCLVNEHDVRISTVEHLNAALAGLGIDNIVIEVNAPEIPIMDGSAAPFVYLLLDAGIDELNCAKKFVRIKETVRVEDGDKWAEFRPYNGFTLDFTIDFNHPAIDSSSQRYAMNFSADAFMRQISRARTFGFMRDIEYLQSRGLCLGGSFDCAIVVDDYRVLNEDGLRFEDEFVRHKMLDAIGDLFMCGHNIIGAFTAYKSGHALNNKLLQAVLAKQEAWEFVTFQDDAELPLAFKAPSTVLA</sequence>
<comment type="function">
    <text evidence="1">Catalyzes the hydrolysis of UDP-3-O-myristoyl-N-acetylglucosamine to form UDP-3-O-myristoylglucosamine and acetate, the committed step in lipid A biosynthesis.</text>
</comment>
<comment type="catalytic activity">
    <reaction evidence="1">
        <text>a UDP-3-O-[(3R)-3-hydroxyacyl]-N-acetyl-alpha-D-glucosamine + H2O = a UDP-3-O-[(3R)-3-hydroxyacyl]-alpha-D-glucosamine + acetate</text>
        <dbReference type="Rhea" id="RHEA:67816"/>
        <dbReference type="ChEBI" id="CHEBI:15377"/>
        <dbReference type="ChEBI" id="CHEBI:30089"/>
        <dbReference type="ChEBI" id="CHEBI:137740"/>
        <dbReference type="ChEBI" id="CHEBI:173225"/>
        <dbReference type="EC" id="3.5.1.108"/>
    </reaction>
</comment>
<comment type="cofactor">
    <cofactor evidence="1">
        <name>Zn(2+)</name>
        <dbReference type="ChEBI" id="CHEBI:29105"/>
    </cofactor>
</comment>
<comment type="pathway">
    <text evidence="1">Glycolipid biosynthesis; lipid IV(A) biosynthesis; lipid IV(A) from (3R)-3-hydroxytetradecanoyl-[acyl-carrier-protein] and UDP-N-acetyl-alpha-D-glucosamine: step 2/6.</text>
</comment>
<comment type="similarity">
    <text evidence="1">Belongs to the LpxC family.</text>
</comment>
<keyword id="KW-0378">Hydrolase</keyword>
<keyword id="KW-0441">Lipid A biosynthesis</keyword>
<keyword id="KW-0444">Lipid biosynthesis</keyword>
<keyword id="KW-0443">Lipid metabolism</keyword>
<keyword id="KW-0479">Metal-binding</keyword>
<keyword id="KW-0862">Zinc</keyword>
<gene>
    <name evidence="1" type="primary">lpxC</name>
    <name type="ordered locus">SeD_A0143</name>
</gene>
<name>LPXC_SALDC</name>
<accession>B5FI78</accession>
<reference key="1">
    <citation type="journal article" date="2011" name="J. Bacteriol.">
        <title>Comparative genomics of 28 Salmonella enterica isolates: evidence for CRISPR-mediated adaptive sublineage evolution.</title>
        <authorList>
            <person name="Fricke W.F."/>
            <person name="Mammel M.K."/>
            <person name="McDermott P.F."/>
            <person name="Tartera C."/>
            <person name="White D.G."/>
            <person name="Leclerc J.E."/>
            <person name="Ravel J."/>
            <person name="Cebula T.A."/>
        </authorList>
    </citation>
    <scope>NUCLEOTIDE SEQUENCE [LARGE SCALE GENOMIC DNA]</scope>
    <source>
        <strain>CT_02021853</strain>
    </source>
</reference>
<proteinExistence type="inferred from homology"/>